<evidence type="ECO:0000250" key="1">
    <source>
        <dbReference type="UniProtKB" id="Q9HBF4"/>
    </source>
</evidence>
<evidence type="ECO:0000255" key="2">
    <source>
        <dbReference type="PROSITE-ProRule" id="PRU00091"/>
    </source>
</evidence>
<accession>Q5RFL4</accession>
<sequence length="789" mass="88298">MSAQTSPAEKGLNPGLMCQESYACSGTDEAIFECDECCSLQCLRCEEELHRQERLRNHERIRLKPGHVPYCDLCKGLSGHLPGVRQRAIVRCQTCKINLCLECQKRTHSGGNKRRHPVTVYNVSNLQESLEAEEMDEETKRKKMTEKVVSFLLVDENEEIQVTNEEDFIRKLDCKPDQHLKVASIFGNTGDGKSHTLNHTFFYGREVFKTSPTQESCTVGVWAAYDPVHKVAVIDTEGLLGATVNLSQRTRLLLKVLAISDLVIYRTHADRLHNDLFKFLGDASEAYLKHYTKELKATTARCGLDVPLSTLGPAVIIFHETVHTQLLGSDHPSEVPEKLIQDRFRKLGRFPEAFSSIHYKGTRTYNPPTDFSGLRRALEQLLENNTTRSPRHPGVIFKALKALSDRFSGEIPDDQMAHSSFFPDEYFTCSSLCLSCGVGCKNSMNHGKEGVPHEAKSRCRYSHQYDNRVYTCKACYEGGEEVSVVPKTSASTDSPWMGLAKYAWSGYVIECPNCGVVYRSRQYWFGNQDPVDTVVRTEIVHVWPGTDGFLKDNNNAAQRLLDGMNFMAQSVSELSLGPTKAVTSWLTDQIAPAYWRPNSQILSCNKCATSFKDNDTKHHCRACGEGFCDSCSSKTRPVPERGWGPAPVRVCDNCYEARNVQLAVTEAQVDDEGGTLIARKVGEAVQNTLGAVVTAIDIPLGLVKDAARPAYWVPDHEILHCHNCRKEFSIKLSKHHCRACGQGFCDECSHDRRAVPSRGWDHPVRVCFNCNKKPAWTSLSVMTGKGPLC</sequence>
<protein>
    <recommendedName>
        <fullName>Zinc finger FYVE domain-containing protein 1</fullName>
    </recommendedName>
</protein>
<comment type="function">
    <text evidence="1">Plays a role in the formation of lipid droplets (LDs) which are storage organelles at the center of lipid and energy homeostasis (By similarity). Regulates the morphology, size and distribution of LDs (By similarity). Mediates the formation of endoplasmic reticulum-lipid droplets (ER-LD) contact sites by forming a complex with RAB18 and ZW10 (By similarity). Binds to phosphatidylinositol 3-phosphate (PtdIns3P) through FYVE-type zinc finger (By similarity).</text>
</comment>
<comment type="subunit">
    <text evidence="1">Interacts with RAB18 (in GTP-bound form) (By similarity). Interacts with BSCL2 in a RAB18-dependent manner (By similarity). Interacts with ZW10 (By similarity).</text>
</comment>
<comment type="subcellular location">
    <subcellularLocation>
        <location evidence="1">Golgi apparatus</location>
    </subcellularLocation>
    <subcellularLocation>
        <location evidence="1">Golgi apparatus</location>
        <location evidence="1">Golgi stack</location>
    </subcellularLocation>
    <subcellularLocation>
        <location evidence="1">Endoplasmic reticulum</location>
    </subcellularLocation>
    <subcellularLocation>
        <location evidence="1">Preautophagosomal structure</location>
    </subcellularLocation>
    <subcellularLocation>
        <location evidence="1">Lipid droplet</location>
    </subcellularLocation>
    <subcellularLocation>
        <location evidence="1">Mitochondrion</location>
    </subcellularLocation>
    <text evidence="1">Resides predominantly in the cisternal stacks of the Golgi. Colocalizes with TRIM13 on the perinuclear endoplasmic reticulum. During starvation conditions, localizes to omegasomes which are endoplasmic reticulum connected strutures at the origin of preautophagosomal structures. Localizes to lipid droplets in the presence of oleic acid (By similarity).</text>
</comment>
<dbReference type="EMBL" id="CR857141">
    <property type="protein sequence ID" value="CAH89443.1"/>
    <property type="molecule type" value="mRNA"/>
</dbReference>
<dbReference type="RefSeq" id="NP_001124616.1">
    <property type="nucleotide sequence ID" value="NM_001131144.2"/>
</dbReference>
<dbReference type="FunCoup" id="Q5RFL4">
    <property type="interactions" value="1819"/>
</dbReference>
<dbReference type="STRING" id="9601.ENSPPYP00000006780"/>
<dbReference type="GeneID" id="100171453"/>
<dbReference type="KEGG" id="pon:100171453"/>
<dbReference type="CTD" id="53349"/>
<dbReference type="eggNOG" id="KOG1818">
    <property type="taxonomic scope" value="Eukaryota"/>
</dbReference>
<dbReference type="InParanoid" id="Q5RFL4"/>
<dbReference type="OrthoDB" id="68108at2759"/>
<dbReference type="Proteomes" id="UP000001595">
    <property type="component" value="Unplaced"/>
</dbReference>
<dbReference type="GO" id="GO:0005783">
    <property type="term" value="C:endoplasmic reticulum"/>
    <property type="evidence" value="ECO:0000250"/>
    <property type="project" value="UniProtKB"/>
</dbReference>
<dbReference type="GO" id="GO:0005789">
    <property type="term" value="C:endoplasmic reticulum membrane"/>
    <property type="evidence" value="ECO:0000250"/>
    <property type="project" value="UniProtKB"/>
</dbReference>
<dbReference type="GO" id="GO:0005794">
    <property type="term" value="C:Golgi apparatus"/>
    <property type="evidence" value="ECO:0000250"/>
    <property type="project" value="UniProtKB"/>
</dbReference>
<dbReference type="GO" id="GO:0005795">
    <property type="term" value="C:Golgi stack"/>
    <property type="evidence" value="ECO:0007669"/>
    <property type="project" value="UniProtKB-SubCell"/>
</dbReference>
<dbReference type="GO" id="GO:0005811">
    <property type="term" value="C:lipid droplet"/>
    <property type="evidence" value="ECO:0000250"/>
    <property type="project" value="UniProtKB"/>
</dbReference>
<dbReference type="GO" id="GO:0005739">
    <property type="term" value="C:mitochondrion"/>
    <property type="evidence" value="ECO:0000250"/>
    <property type="project" value="UniProtKB"/>
</dbReference>
<dbReference type="GO" id="GO:1990462">
    <property type="term" value="C:omegasome"/>
    <property type="evidence" value="ECO:0000250"/>
    <property type="project" value="UniProtKB"/>
</dbReference>
<dbReference type="GO" id="GO:0000407">
    <property type="term" value="C:phagophore assembly site"/>
    <property type="evidence" value="ECO:0000250"/>
    <property type="project" value="UniProtKB"/>
</dbReference>
<dbReference type="GO" id="GO:0005545">
    <property type="term" value="F:1-phosphatidylinositol binding"/>
    <property type="evidence" value="ECO:0007669"/>
    <property type="project" value="TreeGrafter"/>
</dbReference>
<dbReference type="GO" id="GO:0005547">
    <property type="term" value="F:phosphatidylinositol-3,4,5-trisphosphate binding"/>
    <property type="evidence" value="ECO:0007669"/>
    <property type="project" value="TreeGrafter"/>
</dbReference>
<dbReference type="GO" id="GO:0043325">
    <property type="term" value="F:phosphatidylinositol-3,4-bisphosphate binding"/>
    <property type="evidence" value="ECO:0007669"/>
    <property type="project" value="TreeGrafter"/>
</dbReference>
<dbReference type="GO" id="GO:0032266">
    <property type="term" value="F:phosphatidylinositol-3-phosphate binding"/>
    <property type="evidence" value="ECO:0007669"/>
    <property type="project" value="TreeGrafter"/>
</dbReference>
<dbReference type="GO" id="GO:0008270">
    <property type="term" value="F:zinc ion binding"/>
    <property type="evidence" value="ECO:0007669"/>
    <property type="project" value="UniProtKB-KW"/>
</dbReference>
<dbReference type="GO" id="GO:0140042">
    <property type="term" value="P:lipid droplet formation"/>
    <property type="evidence" value="ECO:0000250"/>
    <property type="project" value="UniProtKB"/>
</dbReference>
<dbReference type="CDD" id="cd19819">
    <property type="entry name" value="Bbox1_ZFYVE1_rpt1"/>
    <property type="match status" value="1"/>
</dbReference>
<dbReference type="CDD" id="cd19820">
    <property type="entry name" value="Bbox1_ZFYVE1_rpt2"/>
    <property type="match status" value="1"/>
</dbReference>
<dbReference type="CDD" id="cd15734">
    <property type="entry name" value="FYVE_ZFYV1"/>
    <property type="match status" value="1"/>
</dbReference>
<dbReference type="CDD" id="cd01851">
    <property type="entry name" value="GBP"/>
    <property type="match status" value="1"/>
</dbReference>
<dbReference type="FunFam" id="3.30.40.10:FF:000109">
    <property type="entry name" value="Zinc finger FYVE domain-containing protein 1"/>
    <property type="match status" value="2"/>
</dbReference>
<dbReference type="FunFam" id="3.40.50.300:FF:000719">
    <property type="entry name" value="Zinc finger FYVE domain-containing protein 1"/>
    <property type="match status" value="1"/>
</dbReference>
<dbReference type="Gene3D" id="3.40.50.300">
    <property type="entry name" value="P-loop containing nucleotide triphosphate hydrolases"/>
    <property type="match status" value="1"/>
</dbReference>
<dbReference type="Gene3D" id="3.30.40.10">
    <property type="entry name" value="Zinc/RING finger domain, C3HC4 (zinc finger)"/>
    <property type="match status" value="2"/>
</dbReference>
<dbReference type="InterPro" id="IPR027417">
    <property type="entry name" value="P-loop_NTPase"/>
</dbReference>
<dbReference type="InterPro" id="IPR042427">
    <property type="entry name" value="ZFYV1"/>
</dbReference>
<dbReference type="InterPro" id="IPR047856">
    <property type="entry name" value="ZFYVE1_first_BBox1"/>
</dbReference>
<dbReference type="InterPro" id="IPR047855">
    <property type="entry name" value="ZFYVE1_second_BBox1"/>
</dbReference>
<dbReference type="InterPro" id="IPR000306">
    <property type="entry name" value="Znf_FYVE"/>
</dbReference>
<dbReference type="InterPro" id="IPR017455">
    <property type="entry name" value="Znf_FYVE-rel"/>
</dbReference>
<dbReference type="InterPro" id="IPR011011">
    <property type="entry name" value="Znf_FYVE_PHD"/>
</dbReference>
<dbReference type="InterPro" id="IPR013083">
    <property type="entry name" value="Znf_RING/FYVE/PHD"/>
</dbReference>
<dbReference type="PANTHER" id="PTHR46624">
    <property type="entry name" value="AGAP002036-PA"/>
    <property type="match status" value="1"/>
</dbReference>
<dbReference type="PANTHER" id="PTHR46624:SF3">
    <property type="entry name" value="ZINC FINGER FYVE DOMAIN-CONTAINING PROTEIN 1"/>
    <property type="match status" value="1"/>
</dbReference>
<dbReference type="Pfam" id="PF22586">
    <property type="entry name" value="ANCHR-like_BBOX"/>
    <property type="match status" value="1"/>
</dbReference>
<dbReference type="Pfam" id="PF01363">
    <property type="entry name" value="FYVE"/>
    <property type="match status" value="2"/>
</dbReference>
<dbReference type="SMART" id="SM00064">
    <property type="entry name" value="FYVE"/>
    <property type="match status" value="2"/>
</dbReference>
<dbReference type="SUPFAM" id="SSF57903">
    <property type="entry name" value="FYVE/PHD zinc finger"/>
    <property type="match status" value="2"/>
</dbReference>
<dbReference type="SUPFAM" id="SSF52540">
    <property type="entry name" value="P-loop containing nucleoside triphosphate hydrolases"/>
    <property type="match status" value="1"/>
</dbReference>
<dbReference type="PROSITE" id="PS50178">
    <property type="entry name" value="ZF_FYVE"/>
    <property type="match status" value="2"/>
</dbReference>
<name>ZFYV1_PONAB</name>
<feature type="chain" id="PRO_0000357049" description="Zinc finger FYVE domain-containing protein 1">
    <location>
        <begin position="1"/>
        <end position="789"/>
    </location>
</feature>
<feature type="zinc finger region" description="FYVE-type 1" evidence="2">
    <location>
        <begin position="598"/>
        <end position="659"/>
    </location>
</feature>
<feature type="zinc finger region" description="FYVE-type 2" evidence="2">
    <location>
        <begin position="715"/>
        <end position="775"/>
    </location>
</feature>
<feature type="region of interest" description="Required for localization in the lipid droplets" evidence="1">
    <location>
        <begin position="416"/>
        <end position="788"/>
    </location>
</feature>
<feature type="binding site" evidence="2">
    <location>
        <position position="604"/>
    </location>
    <ligand>
        <name>Zn(2+)</name>
        <dbReference type="ChEBI" id="CHEBI:29105"/>
        <label>1</label>
    </ligand>
</feature>
<feature type="binding site" evidence="2">
    <location>
        <position position="607"/>
    </location>
    <ligand>
        <name>Zn(2+)</name>
        <dbReference type="ChEBI" id="CHEBI:29105"/>
        <label>1</label>
    </ligand>
</feature>
<feature type="binding site" evidence="2">
    <location>
        <position position="620"/>
    </location>
    <ligand>
        <name>Zn(2+)</name>
        <dbReference type="ChEBI" id="CHEBI:29105"/>
        <label>2</label>
    </ligand>
</feature>
<feature type="binding site" evidence="2">
    <location>
        <position position="623"/>
    </location>
    <ligand>
        <name>Zn(2+)</name>
        <dbReference type="ChEBI" id="CHEBI:29105"/>
        <label>2</label>
    </ligand>
</feature>
<feature type="binding site" evidence="2">
    <location>
        <position position="628"/>
    </location>
    <ligand>
        <name>Zn(2+)</name>
        <dbReference type="ChEBI" id="CHEBI:29105"/>
        <label>1</label>
    </ligand>
</feature>
<feature type="binding site" evidence="2">
    <location>
        <position position="631"/>
    </location>
    <ligand>
        <name>Zn(2+)</name>
        <dbReference type="ChEBI" id="CHEBI:29105"/>
        <label>1</label>
    </ligand>
</feature>
<feature type="binding site" evidence="2">
    <location>
        <position position="651"/>
    </location>
    <ligand>
        <name>Zn(2+)</name>
        <dbReference type="ChEBI" id="CHEBI:29105"/>
        <label>2</label>
    </ligand>
</feature>
<feature type="binding site" evidence="2">
    <location>
        <position position="654"/>
    </location>
    <ligand>
        <name>Zn(2+)</name>
        <dbReference type="ChEBI" id="CHEBI:29105"/>
        <label>2</label>
    </ligand>
</feature>
<feature type="binding site" evidence="2">
    <location>
        <position position="721"/>
    </location>
    <ligand>
        <name>Zn(2+)</name>
        <dbReference type="ChEBI" id="CHEBI:29105"/>
        <label>3</label>
    </ligand>
</feature>
<feature type="binding site" evidence="2">
    <location>
        <position position="724"/>
    </location>
    <ligand>
        <name>Zn(2+)</name>
        <dbReference type="ChEBI" id="CHEBI:29105"/>
        <label>3</label>
    </ligand>
</feature>
<feature type="binding site" evidence="2">
    <location>
        <position position="737"/>
    </location>
    <ligand>
        <name>Zn(2+)</name>
        <dbReference type="ChEBI" id="CHEBI:29105"/>
        <label>4</label>
    </ligand>
</feature>
<feature type="binding site" evidence="2">
    <location>
        <position position="740"/>
    </location>
    <ligand>
        <name>Zn(2+)</name>
        <dbReference type="ChEBI" id="CHEBI:29105"/>
        <label>4</label>
    </ligand>
</feature>
<feature type="binding site" evidence="2">
    <location>
        <position position="745"/>
    </location>
    <ligand>
        <name>Zn(2+)</name>
        <dbReference type="ChEBI" id="CHEBI:29105"/>
        <label>3</label>
    </ligand>
</feature>
<feature type="binding site" evidence="2">
    <location>
        <position position="748"/>
    </location>
    <ligand>
        <name>Zn(2+)</name>
        <dbReference type="ChEBI" id="CHEBI:29105"/>
        <label>3</label>
    </ligand>
</feature>
<feature type="binding site" evidence="2">
    <location>
        <position position="767"/>
    </location>
    <ligand>
        <name>Zn(2+)</name>
        <dbReference type="ChEBI" id="CHEBI:29105"/>
        <label>4</label>
    </ligand>
</feature>
<feature type="binding site" evidence="2">
    <location>
        <position position="770"/>
    </location>
    <ligand>
        <name>Zn(2+)</name>
        <dbReference type="ChEBI" id="CHEBI:29105"/>
        <label>4</label>
    </ligand>
</feature>
<reference key="1">
    <citation type="submission" date="2004-11" db="EMBL/GenBank/DDBJ databases">
        <authorList>
            <consortium name="The German cDNA consortium"/>
        </authorList>
    </citation>
    <scope>NUCLEOTIDE SEQUENCE [LARGE SCALE MRNA]</scope>
    <source>
        <tissue>Kidney</tissue>
    </source>
</reference>
<organism>
    <name type="scientific">Pongo abelii</name>
    <name type="common">Sumatran orangutan</name>
    <name type="synonym">Pongo pygmaeus abelii</name>
    <dbReference type="NCBI Taxonomy" id="9601"/>
    <lineage>
        <taxon>Eukaryota</taxon>
        <taxon>Metazoa</taxon>
        <taxon>Chordata</taxon>
        <taxon>Craniata</taxon>
        <taxon>Vertebrata</taxon>
        <taxon>Euteleostomi</taxon>
        <taxon>Mammalia</taxon>
        <taxon>Eutheria</taxon>
        <taxon>Euarchontoglires</taxon>
        <taxon>Primates</taxon>
        <taxon>Haplorrhini</taxon>
        <taxon>Catarrhini</taxon>
        <taxon>Hominidae</taxon>
        <taxon>Pongo</taxon>
    </lineage>
</organism>
<keyword id="KW-0256">Endoplasmic reticulum</keyword>
<keyword id="KW-0333">Golgi apparatus</keyword>
<keyword id="KW-0551">Lipid droplet</keyword>
<keyword id="KW-0479">Metal-binding</keyword>
<keyword id="KW-0496">Mitochondrion</keyword>
<keyword id="KW-1185">Reference proteome</keyword>
<keyword id="KW-0677">Repeat</keyword>
<keyword id="KW-0862">Zinc</keyword>
<keyword id="KW-0863">Zinc-finger</keyword>
<proteinExistence type="evidence at transcript level"/>
<gene>
    <name type="primary">ZFYVE1</name>
</gene>